<proteinExistence type="inferred from homology"/>
<comment type="function">
    <text evidence="3">Member of the two-component regulatory system LytR/LytS that regulates genes involved in autolysis, programmed cell death, biofilm formation and cell wall metabolism. Also participates in sensing and responding to host defense cationic antimicrobial peptides (HDPs). Upon phosphorylation by LytS, functions as a transcription regulator by direct binding to promoter regions of target genes including lrgA and lrgB, to positively regulate their expression.</text>
</comment>
<comment type="subunit">
    <text evidence="2">Homodimer; when phosphorylated.</text>
</comment>
<comment type="subcellular location">
    <subcellularLocation>
        <location evidence="1">Cytoplasm</location>
    </subcellularLocation>
</comment>
<comment type="PTM">
    <text evidence="2">Phosphorylated and dephosphorylated by LytS.</text>
</comment>
<organism>
    <name type="scientific">Staphylococcus aureus (strain N315)</name>
    <dbReference type="NCBI Taxonomy" id="158879"/>
    <lineage>
        <taxon>Bacteria</taxon>
        <taxon>Bacillati</taxon>
        <taxon>Bacillota</taxon>
        <taxon>Bacilli</taxon>
        <taxon>Bacillales</taxon>
        <taxon>Staphylococcaceae</taxon>
        <taxon>Staphylococcus</taxon>
    </lineage>
</organism>
<dbReference type="EMBL" id="BA000018">
    <property type="protein sequence ID" value="BAB41475.1"/>
    <property type="molecule type" value="Genomic_DNA"/>
</dbReference>
<dbReference type="PIR" id="H89789">
    <property type="entry name" value="H89789"/>
</dbReference>
<dbReference type="RefSeq" id="WP_000645452.1">
    <property type="nucleotide sequence ID" value="NC_002745.2"/>
</dbReference>
<dbReference type="SMR" id="P60610"/>
<dbReference type="EnsemblBacteria" id="BAB41475">
    <property type="protein sequence ID" value="BAB41475"/>
    <property type="gene ID" value="BAB41475"/>
</dbReference>
<dbReference type="KEGG" id="sau:SA0251"/>
<dbReference type="HOGENOM" id="CLU_000445_14_1_9"/>
<dbReference type="GO" id="GO:0005737">
    <property type="term" value="C:cytoplasm"/>
    <property type="evidence" value="ECO:0007669"/>
    <property type="project" value="UniProtKB-SubCell"/>
</dbReference>
<dbReference type="GO" id="GO:0003677">
    <property type="term" value="F:DNA binding"/>
    <property type="evidence" value="ECO:0007669"/>
    <property type="project" value="UniProtKB-KW"/>
</dbReference>
<dbReference type="GO" id="GO:0000156">
    <property type="term" value="F:phosphorelay response regulator activity"/>
    <property type="evidence" value="ECO:0007669"/>
    <property type="project" value="InterPro"/>
</dbReference>
<dbReference type="CDD" id="cd17532">
    <property type="entry name" value="REC_LytTR_AlgR-like"/>
    <property type="match status" value="1"/>
</dbReference>
<dbReference type="FunFam" id="3.40.50.2300:FF:000134">
    <property type="entry name" value="Autolysin response regulator LytR"/>
    <property type="match status" value="1"/>
</dbReference>
<dbReference type="Gene3D" id="3.40.50.2300">
    <property type="match status" value="1"/>
</dbReference>
<dbReference type="Gene3D" id="2.40.50.1020">
    <property type="entry name" value="LytTr DNA-binding domain"/>
    <property type="match status" value="1"/>
</dbReference>
<dbReference type="InterPro" id="IPR011006">
    <property type="entry name" value="CheY-like_superfamily"/>
</dbReference>
<dbReference type="InterPro" id="IPR046947">
    <property type="entry name" value="LytR-like"/>
</dbReference>
<dbReference type="InterPro" id="IPR007492">
    <property type="entry name" value="LytTR_DNA-bd_dom"/>
</dbReference>
<dbReference type="InterPro" id="IPR001789">
    <property type="entry name" value="Sig_transdc_resp-reg_receiver"/>
</dbReference>
<dbReference type="NCBIfam" id="NF010684">
    <property type="entry name" value="PRK14084.1"/>
    <property type="match status" value="1"/>
</dbReference>
<dbReference type="PANTHER" id="PTHR37299:SF1">
    <property type="entry name" value="STAGE 0 SPORULATION PROTEIN A HOMOLOG"/>
    <property type="match status" value="1"/>
</dbReference>
<dbReference type="PANTHER" id="PTHR37299">
    <property type="entry name" value="TRANSCRIPTIONAL REGULATOR-RELATED"/>
    <property type="match status" value="1"/>
</dbReference>
<dbReference type="Pfam" id="PF04397">
    <property type="entry name" value="LytTR"/>
    <property type="match status" value="1"/>
</dbReference>
<dbReference type="Pfam" id="PF00072">
    <property type="entry name" value="Response_reg"/>
    <property type="match status" value="1"/>
</dbReference>
<dbReference type="SMART" id="SM00850">
    <property type="entry name" value="LytTR"/>
    <property type="match status" value="1"/>
</dbReference>
<dbReference type="SMART" id="SM00448">
    <property type="entry name" value="REC"/>
    <property type="match status" value="1"/>
</dbReference>
<dbReference type="SUPFAM" id="SSF52172">
    <property type="entry name" value="CheY-like"/>
    <property type="match status" value="1"/>
</dbReference>
<dbReference type="PROSITE" id="PS50930">
    <property type="entry name" value="HTH_LYTTR"/>
    <property type="match status" value="1"/>
</dbReference>
<dbReference type="PROSITE" id="PS50110">
    <property type="entry name" value="RESPONSE_REGULATORY"/>
    <property type="match status" value="1"/>
</dbReference>
<evidence type="ECO:0000250" key="1"/>
<evidence type="ECO:0000250" key="2">
    <source>
        <dbReference type="UniProtKB" id="P60609"/>
    </source>
</evidence>
<evidence type="ECO:0000250" key="3">
    <source>
        <dbReference type="UniProtKB" id="P60611"/>
    </source>
</evidence>
<evidence type="ECO:0000255" key="4">
    <source>
        <dbReference type="PROSITE-ProRule" id="PRU00112"/>
    </source>
</evidence>
<evidence type="ECO:0000255" key="5">
    <source>
        <dbReference type="PROSITE-ProRule" id="PRU00169"/>
    </source>
</evidence>
<sequence length="246" mass="28221">MKALIIDDEPLARNELTYLLNEIGGFEEINEAENVKETLEALLINQYDIIFLDVNLMDENGIELGAKIQKMKEPPAIIFATAHDQYAVQAFELNATDYILKPFGQKRIEQAVNKVRATKAKDDNNASAIANDMSANFDQSLPVEIDDKIHMLKQQNIIGIGTHNGITTIHTTNHKYETTEPLNRYEKRLNPTYFIRIHRSYIINTKHIKEVQQWFNYTYMVILTNGVKMQVGRSFMKDFKASIGLL</sequence>
<reference key="1">
    <citation type="journal article" date="2001" name="Lancet">
        <title>Whole genome sequencing of meticillin-resistant Staphylococcus aureus.</title>
        <authorList>
            <person name="Kuroda M."/>
            <person name="Ohta T."/>
            <person name="Uchiyama I."/>
            <person name="Baba T."/>
            <person name="Yuzawa H."/>
            <person name="Kobayashi I."/>
            <person name="Cui L."/>
            <person name="Oguchi A."/>
            <person name="Aoki K."/>
            <person name="Nagai Y."/>
            <person name="Lian J.-Q."/>
            <person name="Ito T."/>
            <person name="Kanamori M."/>
            <person name="Matsumaru H."/>
            <person name="Maruyama A."/>
            <person name="Murakami H."/>
            <person name="Hosoyama A."/>
            <person name="Mizutani-Ui Y."/>
            <person name="Takahashi N.K."/>
            <person name="Sawano T."/>
            <person name="Inoue R."/>
            <person name="Kaito C."/>
            <person name="Sekimizu K."/>
            <person name="Hirakawa H."/>
            <person name="Kuhara S."/>
            <person name="Goto S."/>
            <person name="Yabuzaki J."/>
            <person name="Kanehisa M."/>
            <person name="Yamashita A."/>
            <person name="Oshima K."/>
            <person name="Furuya K."/>
            <person name="Yoshino C."/>
            <person name="Shiba T."/>
            <person name="Hattori M."/>
            <person name="Ogasawara N."/>
            <person name="Hayashi H."/>
            <person name="Hiramatsu K."/>
        </authorList>
    </citation>
    <scope>NUCLEOTIDE SEQUENCE [LARGE SCALE GENOMIC DNA]</scope>
    <source>
        <strain>N315</strain>
    </source>
</reference>
<accession>P60610</accession>
<accession>P96456</accession>
<name>LYTR_STAAN</name>
<feature type="chain" id="PRO_0000081128" description="Transcriptional regulatory protein LytR">
    <location>
        <begin position="1"/>
        <end position="246"/>
    </location>
</feature>
<feature type="domain" description="Response regulatory" evidence="5">
    <location>
        <begin position="2"/>
        <end position="116"/>
    </location>
</feature>
<feature type="domain" description="HTH LytTR-type" evidence="4">
    <location>
        <begin position="141"/>
        <end position="245"/>
    </location>
</feature>
<feature type="modified residue" description="4-aspartylphosphate" evidence="5">
    <location>
        <position position="53"/>
    </location>
</feature>
<gene>
    <name type="primary">lytR</name>
    <name type="ordered locus">SA0251</name>
</gene>
<keyword id="KW-0963">Cytoplasm</keyword>
<keyword id="KW-0238">DNA-binding</keyword>
<keyword id="KW-0597">Phosphoprotein</keyword>
<keyword id="KW-0804">Transcription</keyword>
<keyword id="KW-0805">Transcription regulation</keyword>
<keyword id="KW-0902">Two-component regulatory system</keyword>
<protein>
    <recommendedName>
        <fullName>Transcriptional regulatory protein LytR</fullName>
    </recommendedName>
    <alternativeName>
        <fullName>Sensory transduction protein LytR</fullName>
    </alternativeName>
</protein>